<gene>
    <name evidence="1 8" type="primary">OSGEP</name>
    <name type="synonym">GCPL1</name>
</gene>
<keyword id="KW-0002">3D-structure</keyword>
<keyword id="KW-0012">Acyltransferase</keyword>
<keyword id="KW-0963">Cytoplasm</keyword>
<keyword id="KW-0225">Disease variant</keyword>
<keyword id="KW-0887">Epilepsy</keyword>
<keyword id="KW-0991">Intellectual disability</keyword>
<keyword id="KW-0479">Metal-binding</keyword>
<keyword id="KW-0539">Nucleus</keyword>
<keyword id="KW-1267">Proteomics identification</keyword>
<keyword id="KW-1185">Reference proteome</keyword>
<keyword id="KW-0808">Transferase</keyword>
<keyword id="KW-0819">tRNA processing</keyword>
<name>OSGEP_HUMAN</name>
<evidence type="ECO:0000255" key="1">
    <source>
        <dbReference type="HAMAP-Rule" id="MF_03180"/>
    </source>
</evidence>
<evidence type="ECO:0000269" key="2">
    <source>
    </source>
</evidence>
<evidence type="ECO:0000269" key="3">
    <source>
    </source>
</evidence>
<evidence type="ECO:0000269" key="4">
    <source>
    </source>
</evidence>
<evidence type="ECO:0000269" key="5">
    <source>
    </source>
</evidence>
<evidence type="ECO:0000269" key="6">
    <source>
    </source>
</evidence>
<evidence type="ECO:0000269" key="7">
    <source>
    </source>
</evidence>
<evidence type="ECO:0000303" key="8">
    <source>
    </source>
</evidence>
<evidence type="ECO:0000305" key="9">
    <source>
    </source>
</evidence>
<evidence type="ECO:0000305" key="10">
    <source>
    </source>
</evidence>
<evidence type="ECO:0000305" key="11">
    <source>
    </source>
</evidence>
<evidence type="ECO:0007744" key="12">
    <source>
        <dbReference type="PDB" id="6GWJ"/>
    </source>
</evidence>
<evidence type="ECO:0007829" key="13">
    <source>
        <dbReference type="PDB" id="6GWJ"/>
    </source>
</evidence>
<proteinExistence type="evidence at protein level"/>
<sequence>MPAVLGFEGSANKIGVGVVRDGKVLANPRRTYVTPPGTGFLPGDTARHHRAVILDLLQEALTESGLTSQDIDCIAYTKGPGMGAPLVSVAVVARTVAQLWNKPLVGVNHCIGHIEMGRLITGATSPTVLYVSGGNTQVIAYSEHRYRIFGETIDIAVGNCLDRFARVLKISNDPSPGYNIEQMAKRGKKLVELPYTVKGMDVSFSGILSFIEDVAHRMLATGECTPEDLCFSLQETVFAMLVEITERAMAHCGSQEALIVGGVGCNVRLQEMMATMCQERGARLFATDERFCIDNGAMIAQAGWEMFRAGHRTPLSDSGVTQRYRTDEVEVTWRD</sequence>
<comment type="function">
    <text evidence="1 5 6 9 10">Component of the EKC/KEOPS complex that is required for the formation of a threonylcarbamoyl group on adenosine at position 37 (t(6)A37) in tRNAs that read codons beginning with adenine. The complex is probably involved in the transfer of the threonylcarbamoyl moiety of threonylcarbamoyl-AMP (TC-AMP) to the N6 group of A37. OSGEP likely plays a direct catalytic role in this reaction, but requires other protein(s) of the complex to fulfill this activity.</text>
</comment>
<comment type="catalytic activity">
    <reaction evidence="1 11">
        <text>L-threonylcarbamoyladenylate + adenosine(37) in tRNA = N(6)-L-threonylcarbamoyladenosine(37) in tRNA + AMP + H(+)</text>
        <dbReference type="Rhea" id="RHEA:37059"/>
        <dbReference type="Rhea" id="RHEA-COMP:10162"/>
        <dbReference type="Rhea" id="RHEA-COMP:10163"/>
        <dbReference type="ChEBI" id="CHEBI:15378"/>
        <dbReference type="ChEBI" id="CHEBI:73682"/>
        <dbReference type="ChEBI" id="CHEBI:74411"/>
        <dbReference type="ChEBI" id="CHEBI:74418"/>
        <dbReference type="ChEBI" id="CHEBI:456215"/>
        <dbReference type="EC" id="2.3.1.234"/>
    </reaction>
</comment>
<comment type="cofactor">
    <cofactor evidence="1">
        <name>a divalent metal cation</name>
        <dbReference type="ChEBI" id="CHEBI:60240"/>
    </cofactor>
    <text evidence="1">Binds 1 divalent metal cation per subunit.</text>
</comment>
<comment type="subunit">
    <text evidence="1 3 4 6 7">Component of the EKC/KEOPS complex composed of at least GON7, TP53RK, TPRKB, OSGEP and LAGE3; the whole complex dimerizes. Interacts with PRAME.</text>
</comment>
<comment type="interaction">
    <interactant intactId="EBI-1056510">
        <id>Q9NPF4</id>
    </interactant>
    <interactant intactId="EBI-747185">
        <id>O95817</id>
        <label>BAG3</label>
    </interactant>
    <organismsDiffer>false</organismsDiffer>
    <experiments>3</experiments>
</comment>
<comment type="interaction">
    <interactant intactId="EBI-1056510">
        <id>Q9NPF4</id>
    </interactant>
    <interactant intactId="EBI-1052105">
        <id>Q14657</id>
        <label>LAGE3</label>
    </interactant>
    <organismsDiffer>false</organismsDiffer>
    <experiments>6</experiments>
</comment>
<comment type="interaction">
    <interactant intactId="EBI-1056510">
        <id>Q9NPF4</id>
    </interactant>
    <interactant intactId="EBI-739588">
        <id>Q96S44</id>
        <label>TP53RK</label>
    </interactant>
    <organismsDiffer>false</organismsDiffer>
    <experiments>6</experiments>
</comment>
<comment type="subcellular location">
    <subcellularLocation>
        <location evidence="1 6">Cytoplasm</location>
    </subcellularLocation>
    <subcellularLocation>
        <location evidence="1 3 6">Nucleus</location>
    </subcellularLocation>
</comment>
<comment type="tissue specificity">
    <text evidence="2">Widely expressed at low level. Expressed in heart, placenta, liver, kidney, lung, brain, skeletal muscle and pancreas.</text>
</comment>
<comment type="disease" evidence="5 6 7">
    <disease id="DI-05106">
        <name>Galloway-Mowat syndrome 3</name>
        <acronym>GAMOS3</acronym>
        <description>A form of Galloway-Mowat syndrome, a severe renal-neurological disease characterized by early-onset nephrotic syndrome associated with microcephaly, central nervous system abnormalities, developmental delays, and a propensity for seizures. Brain anomalies include gyration defects ranging from lissencephaly to pachygyria and polymicrogyria, and cerebellar hypoplasia. Most patients show facial dysmorphism characterized by a small, narrow forehead, large/floppy ears, deep-set eyes, hypertelorism and micrognathia. Additional variable features are visual impairment and arachnodactyly. Most patients die in early childhood.</description>
        <dbReference type="MIM" id="617729"/>
    </disease>
    <text>The disease is caused by variants affecting the gene represented in this entry.</text>
</comment>
<comment type="similarity">
    <text evidence="1">Belongs to the KAE1 / TsaD family.</text>
</comment>
<accession>Q9NPF4</accession>
<accession>Q6IAC3</accession>
<reference key="1">
    <citation type="journal article" date="2002" name="Gene">
        <title>Sequencing analysis of a putative human O-sialoglycoprotein endopeptidase gene (OSGEP) and analysis of a bidirectional promoter between the OSGEP and APEX genes.</title>
        <authorList>
            <person name="Seki Y."/>
            <person name="Ikeda S."/>
            <person name="Kiyohara H."/>
            <person name="Ayabe H."/>
            <person name="Seki T."/>
            <person name="Matsui H."/>
        </authorList>
    </citation>
    <scope>NUCLEOTIDE SEQUENCE [GENOMIC DNA / MRNA]</scope>
    <scope>TISSUE SPECIFICITY</scope>
    <source>
        <tissue>Placenta</tissue>
    </source>
</reference>
<reference key="2">
    <citation type="submission" date="2000-01" db="EMBL/GenBank/DDBJ databases">
        <title>Cloning and sequencing of putative human sialoglycoprotease.</title>
        <authorList>
            <person name="Wigelsworth D.J."/>
            <person name="Coadwell J."/>
            <person name="Rawlings N.D."/>
            <person name="Barrett A.J."/>
        </authorList>
    </citation>
    <scope>NUCLEOTIDE SEQUENCE [MRNA]</scope>
    <source>
        <tissue>Brain</tissue>
    </source>
</reference>
<reference key="3">
    <citation type="journal article" date="2004" name="Nat. Genet.">
        <title>Complete sequencing and characterization of 21,243 full-length human cDNAs.</title>
        <authorList>
            <person name="Ota T."/>
            <person name="Suzuki Y."/>
            <person name="Nishikawa T."/>
            <person name="Otsuki T."/>
            <person name="Sugiyama T."/>
            <person name="Irie R."/>
            <person name="Wakamatsu A."/>
            <person name="Hayashi K."/>
            <person name="Sato H."/>
            <person name="Nagai K."/>
            <person name="Kimura K."/>
            <person name="Makita H."/>
            <person name="Sekine M."/>
            <person name="Obayashi M."/>
            <person name="Nishi T."/>
            <person name="Shibahara T."/>
            <person name="Tanaka T."/>
            <person name="Ishii S."/>
            <person name="Yamamoto J."/>
            <person name="Saito K."/>
            <person name="Kawai Y."/>
            <person name="Isono Y."/>
            <person name="Nakamura Y."/>
            <person name="Nagahari K."/>
            <person name="Murakami K."/>
            <person name="Yasuda T."/>
            <person name="Iwayanagi T."/>
            <person name="Wagatsuma M."/>
            <person name="Shiratori A."/>
            <person name="Sudo H."/>
            <person name="Hosoiri T."/>
            <person name="Kaku Y."/>
            <person name="Kodaira H."/>
            <person name="Kondo H."/>
            <person name="Sugawara M."/>
            <person name="Takahashi M."/>
            <person name="Kanda K."/>
            <person name="Yokoi T."/>
            <person name="Furuya T."/>
            <person name="Kikkawa E."/>
            <person name="Omura Y."/>
            <person name="Abe K."/>
            <person name="Kamihara K."/>
            <person name="Katsuta N."/>
            <person name="Sato K."/>
            <person name="Tanikawa M."/>
            <person name="Yamazaki M."/>
            <person name="Ninomiya K."/>
            <person name="Ishibashi T."/>
            <person name="Yamashita H."/>
            <person name="Murakawa K."/>
            <person name="Fujimori K."/>
            <person name="Tanai H."/>
            <person name="Kimata M."/>
            <person name="Watanabe M."/>
            <person name="Hiraoka S."/>
            <person name="Chiba Y."/>
            <person name="Ishida S."/>
            <person name="Ono Y."/>
            <person name="Takiguchi S."/>
            <person name="Watanabe S."/>
            <person name="Yosida M."/>
            <person name="Hotuta T."/>
            <person name="Kusano J."/>
            <person name="Kanehori K."/>
            <person name="Takahashi-Fujii A."/>
            <person name="Hara H."/>
            <person name="Tanase T.-O."/>
            <person name="Nomura Y."/>
            <person name="Togiya S."/>
            <person name="Komai F."/>
            <person name="Hara R."/>
            <person name="Takeuchi K."/>
            <person name="Arita M."/>
            <person name="Imose N."/>
            <person name="Musashino K."/>
            <person name="Yuuki H."/>
            <person name="Oshima A."/>
            <person name="Sasaki N."/>
            <person name="Aotsuka S."/>
            <person name="Yoshikawa Y."/>
            <person name="Matsunawa H."/>
            <person name="Ichihara T."/>
            <person name="Shiohata N."/>
            <person name="Sano S."/>
            <person name="Moriya S."/>
            <person name="Momiyama H."/>
            <person name="Satoh N."/>
            <person name="Takami S."/>
            <person name="Terashima Y."/>
            <person name="Suzuki O."/>
            <person name="Nakagawa S."/>
            <person name="Senoh A."/>
            <person name="Mizoguchi H."/>
            <person name="Goto Y."/>
            <person name="Shimizu F."/>
            <person name="Wakebe H."/>
            <person name="Hishigaki H."/>
            <person name="Watanabe T."/>
            <person name="Sugiyama A."/>
            <person name="Takemoto M."/>
            <person name="Kawakami B."/>
            <person name="Yamazaki M."/>
            <person name="Watanabe K."/>
            <person name="Kumagai A."/>
            <person name="Itakura S."/>
            <person name="Fukuzumi Y."/>
            <person name="Fujimori Y."/>
            <person name="Komiyama M."/>
            <person name="Tashiro H."/>
            <person name="Tanigami A."/>
            <person name="Fujiwara T."/>
            <person name="Ono T."/>
            <person name="Yamada K."/>
            <person name="Fujii Y."/>
            <person name="Ozaki K."/>
            <person name="Hirao M."/>
            <person name="Ohmori Y."/>
            <person name="Kawabata A."/>
            <person name="Hikiji T."/>
            <person name="Kobatake N."/>
            <person name="Inagaki H."/>
            <person name="Ikema Y."/>
            <person name="Okamoto S."/>
            <person name="Okitani R."/>
            <person name="Kawakami T."/>
            <person name="Noguchi S."/>
            <person name="Itoh T."/>
            <person name="Shigeta K."/>
            <person name="Senba T."/>
            <person name="Matsumura K."/>
            <person name="Nakajima Y."/>
            <person name="Mizuno T."/>
            <person name="Morinaga M."/>
            <person name="Sasaki M."/>
            <person name="Togashi T."/>
            <person name="Oyama M."/>
            <person name="Hata H."/>
            <person name="Watanabe M."/>
            <person name="Komatsu T."/>
            <person name="Mizushima-Sugano J."/>
            <person name="Satoh T."/>
            <person name="Shirai Y."/>
            <person name="Takahashi Y."/>
            <person name="Nakagawa K."/>
            <person name="Okumura K."/>
            <person name="Nagase T."/>
            <person name="Nomura N."/>
            <person name="Kikuchi H."/>
            <person name="Masuho Y."/>
            <person name="Yamashita R."/>
            <person name="Nakai K."/>
            <person name="Yada T."/>
            <person name="Nakamura Y."/>
            <person name="Ohara O."/>
            <person name="Isogai T."/>
            <person name="Sugano S."/>
        </authorList>
    </citation>
    <scope>NUCLEOTIDE SEQUENCE [LARGE SCALE MRNA]</scope>
    <source>
        <tissue>Carcinoma</tissue>
    </source>
</reference>
<reference key="4">
    <citation type="submission" date="2004-06" db="EMBL/GenBank/DDBJ databases">
        <title>Cloning of human full open reading frames in Gateway(TM) system entry vector (pDONR201).</title>
        <authorList>
            <person name="Ebert L."/>
            <person name="Schick M."/>
            <person name="Neubert P."/>
            <person name="Schatten R."/>
            <person name="Henze S."/>
            <person name="Korn B."/>
        </authorList>
    </citation>
    <scope>NUCLEOTIDE SEQUENCE [LARGE SCALE MRNA]</scope>
</reference>
<reference key="5">
    <citation type="journal article" date="2004" name="Genome Res.">
        <title>The status, quality, and expansion of the NIH full-length cDNA project: the Mammalian Gene Collection (MGC).</title>
        <authorList>
            <consortium name="The MGC Project Team"/>
        </authorList>
    </citation>
    <scope>NUCLEOTIDE SEQUENCE [LARGE SCALE MRNA]</scope>
    <source>
        <tissue>Blood</tissue>
    </source>
</reference>
<reference key="6">
    <citation type="journal article" date="2011" name="BMC Syst. Biol.">
        <title>Initial characterization of the human central proteome.</title>
        <authorList>
            <person name="Burkard T.R."/>
            <person name="Planyavsky M."/>
            <person name="Kaupe I."/>
            <person name="Breitwieser F.P."/>
            <person name="Buerckstuemmer T."/>
            <person name="Bennett K.L."/>
            <person name="Superti-Furga G."/>
            <person name="Colinge J."/>
        </authorList>
    </citation>
    <scope>IDENTIFICATION BY MASS SPECTROMETRY [LARGE SCALE ANALYSIS]</scope>
</reference>
<reference key="7">
    <citation type="journal article" date="2012" name="PLoS ONE">
        <title>The human EKC/KEOPS complex is recruited to Cullin2 ubiquitin ligases by the human tumour antigen PRAME.</title>
        <authorList>
            <person name="Costessi A."/>
            <person name="Mahrour N."/>
            <person name="Sharma V."/>
            <person name="Stunnenberg R."/>
            <person name="Stoel M.A."/>
            <person name="Tijchon E."/>
            <person name="Conaway J.W."/>
            <person name="Conaway R.C."/>
            <person name="Stunnenberg H.G."/>
        </authorList>
    </citation>
    <scope>IDENTIFICATION IN THE EKC/KEOPS COMPLEX</scope>
    <scope>INTERACTION WITH PRAME</scope>
    <scope>SUBCELLULAR LOCATION</scope>
</reference>
<reference key="8">
    <citation type="journal article" date="2012" name="Proc. Natl. Acad. Sci. U.S.A.">
        <title>N-terminal acetylome analyses and functional insights of the N-terminal acetyltransferase NatB.</title>
        <authorList>
            <person name="Van Damme P."/>
            <person name="Lasa M."/>
            <person name="Polevoda B."/>
            <person name="Gazquez C."/>
            <person name="Elosegui-Artola A."/>
            <person name="Kim D.S."/>
            <person name="De Juan-Pardo E."/>
            <person name="Demeyer K."/>
            <person name="Hole K."/>
            <person name="Larrea E."/>
            <person name="Timmerman E."/>
            <person name="Prieto J."/>
            <person name="Arnesen T."/>
            <person name="Sherman F."/>
            <person name="Gevaert K."/>
            <person name="Aldabe R."/>
        </authorList>
    </citation>
    <scope>IDENTIFICATION BY MASS SPECTROMETRY [LARGE SCALE ANALYSIS]</scope>
</reference>
<reference key="9">
    <citation type="journal article" date="2017" name="Nucleic Acids Res.">
        <title>Proteomic analysis of the human KEOPS complex identifies C14ORF142 as a core subunit homologous to yeast Gon7.</title>
        <authorList>
            <person name="Wan L.C."/>
            <person name="Maisonneuve P."/>
            <person name="Szilard R.K."/>
            <person name="Lambert J.P."/>
            <person name="Ng T.F."/>
            <person name="Manczyk N."/>
            <person name="Huang H."/>
            <person name="Laister R."/>
            <person name="Caudy A.A."/>
            <person name="Gingras A.C."/>
            <person name="Durocher D."/>
            <person name="Sicheri F."/>
        </authorList>
    </citation>
    <scope>IDENTIFICATION IN THE EKC/KEOPS COMPLEX</scope>
</reference>
<reference key="10">
    <citation type="journal article" date="2017" name="Eur. J. Hum. Genet.">
        <title>tRNA N6-adenosine threonylcarbamoyltransferase defect due to KAE1/TCS3 (OSGEP) mutation manifest by neurodegeneration and renal tubulopathy.</title>
        <authorList>
            <person name="Edvardson S."/>
            <person name="Prunetti L."/>
            <person name="Arraf A."/>
            <person name="Haas D."/>
            <person name="Bacusmo J.M."/>
            <person name="Hu J.F."/>
            <person name="Ta-Shma A."/>
            <person name="Dedon P.C."/>
            <person name="de Crecy-Lagard V."/>
            <person name="Elpeleg O."/>
        </authorList>
    </citation>
    <scope>FUNCTION</scope>
    <scope>SUBCELLULAR LOCATION</scope>
    <scope>IDENTIFICATION IN THE EKC/KEOPS COMPLEX</scope>
    <scope>INVOLVEMENT IN GAMOS3</scope>
    <scope>VARIANT GAMOS3 GLN-325</scope>
</reference>
<reference key="11">
    <citation type="journal article" date="2017" name="Nat. Genet.">
        <title>Mutations in KEOPS-complex genes cause nephrotic syndrome with primary microcephaly.</title>
        <authorList>
            <person name="Braun D.A."/>
            <person name="Rao J."/>
            <person name="Mollet G."/>
            <person name="Schapiro D."/>
            <person name="Daugeron M.C."/>
            <person name="Tan W."/>
            <person name="Gribouval O."/>
            <person name="Boyer O."/>
            <person name="Revy P."/>
            <person name="Jobst-Schwan T."/>
            <person name="Schmidt J.M."/>
            <person name="Lawson J.A."/>
            <person name="Schanze D."/>
            <person name="Ashraf S."/>
            <person name="Ullmann J.F.P."/>
            <person name="Hoogstraten C.A."/>
            <person name="Boddaert N."/>
            <person name="Collinet B."/>
            <person name="Martin G."/>
            <person name="Liger D."/>
            <person name="Lovric S."/>
            <person name="Furlano M."/>
            <person name="Guerrera I.C."/>
            <person name="Sanchez-Ferras O."/>
            <person name="Hu J.F."/>
            <person name="Boschat A.C."/>
            <person name="Sanquer S."/>
            <person name="Menten B."/>
            <person name="Vergult S."/>
            <person name="De Rocker N."/>
            <person name="Airik M."/>
            <person name="Hermle T."/>
            <person name="Shril S."/>
            <person name="Widmeier E."/>
            <person name="Gee H.Y."/>
            <person name="Choi W.I."/>
            <person name="Sadowski C.E."/>
            <person name="Pabst W.L."/>
            <person name="Warejko J.K."/>
            <person name="Daga A."/>
            <person name="Basta T."/>
            <person name="Matejas V."/>
            <person name="Scharmann K."/>
            <person name="Kienast S.D."/>
            <person name="Behnam B."/>
            <person name="Beeson B."/>
            <person name="Begtrup A."/>
            <person name="Bruce M."/>
            <person name="Ch'ng G.S."/>
            <person name="Lin S.P."/>
            <person name="Chang J.H."/>
            <person name="Chen C.H."/>
            <person name="Cho M.T."/>
            <person name="Gaffney P.M."/>
            <person name="Gipson P.E."/>
            <person name="Hsu C.H."/>
            <person name="Kari J.A."/>
            <person name="Ke Y.Y."/>
            <person name="Kiraly-Borri C."/>
            <person name="Lai W.M."/>
            <person name="Lemyre E."/>
            <person name="Littlejohn R.O."/>
            <person name="Masri A."/>
            <person name="Moghtaderi M."/>
            <person name="Nakamura K."/>
            <person name="Ozaltin F."/>
            <person name="Praet M."/>
            <person name="Prasad C."/>
            <person name="Prytula A."/>
            <person name="Roeder E.R."/>
            <person name="Rump P."/>
            <person name="Schnur R.E."/>
            <person name="Shiihara T."/>
            <person name="Sinha M.D."/>
            <person name="Soliman N.A."/>
            <person name="Soulami K."/>
            <person name="Sweetser D.A."/>
            <person name="Tsai W.H."/>
            <person name="Tsai J.D."/>
            <person name="Topaloglu R."/>
            <person name="Vester U."/>
            <person name="Viskochil D.H."/>
            <person name="Vatanavicharn N."/>
            <person name="Waxler J.L."/>
            <person name="Wierenga K.J."/>
            <person name="Wolf M.T.F."/>
            <person name="Wong S.N."/>
            <person name="Leidel S.A."/>
            <person name="Truglio G."/>
            <person name="Dedon P.C."/>
            <person name="Poduri A."/>
            <person name="Mane S."/>
            <person name="Lifton R.P."/>
            <person name="Bouchard M."/>
            <person name="Kannu P."/>
            <person name="Chitayat D."/>
            <person name="Magen D."/>
            <person name="Callewaert B."/>
            <person name="van Tilbeurgh H."/>
            <person name="Zenker M."/>
            <person name="Antignac C."/>
            <person name="Hildebrandt F."/>
        </authorList>
    </citation>
    <scope>FUNCTION</scope>
    <scope>CATALYTIC ACTIVITY</scope>
    <scope>SUBCELLULAR LOCATION</scope>
    <scope>IDENTIFICATION IN THE EKC/KEOPS COMPLEX</scope>
    <scope>INVOLVEMENT IN GAMOS3</scope>
    <scope>VARIANTS GAMOS3 PHE-14; GLU-78; MET-107; ARG-110; THR-111; THR-139; ALA-177; ARG-198; GLN-247; CYS-280; HIS-280; LEU-280; GLN-325 AND TRP-325</scope>
    <scope>CHARACTERIZATION OF VARIANTS GAMOS3 PHE-14; ARG-110; THR-111; ARG-198; GLN-247; LEU-280 AND GLN-325</scope>
</reference>
<reference evidence="12" key="12">
    <citation type="journal article" date="2019" name="Nat. Commun.">
        <title>Defects in t6A tRNA modification due to GON7 and YRDC mutations lead to Galloway-Mowat syndrome.</title>
        <authorList>
            <person name="Arrondel C."/>
            <person name="Missoury S."/>
            <person name="Snoek R."/>
            <person name="Patat J."/>
            <person name="Menara G."/>
            <person name="Collinet B."/>
            <person name="Liger D."/>
            <person name="Durand D."/>
            <person name="Gribouval O."/>
            <person name="Boyer O."/>
            <person name="Buscara L."/>
            <person name="Martin G."/>
            <person name="Machuca E."/>
            <person name="Nevo F."/>
            <person name="Lescop E."/>
            <person name="Braun D.A."/>
            <person name="Boschat A.C."/>
            <person name="Sanquer S."/>
            <person name="Guerrera I.C."/>
            <person name="Revy P."/>
            <person name="Parisot M."/>
            <person name="Masson C."/>
            <person name="Boddaert N."/>
            <person name="Charbit M."/>
            <person name="Decramer S."/>
            <person name="Novo R."/>
            <person name="Macher M.A."/>
            <person name="Ranchin B."/>
            <person name="Bacchetta J."/>
            <person name="Laurent A."/>
            <person name="Collardeau-Frachon S."/>
            <person name="van Eerde A.M."/>
            <person name="Hildebrandt F."/>
            <person name="Magen D."/>
            <person name="Antignac C."/>
            <person name="van Tilbeurgh H."/>
            <person name="Mollet G."/>
        </authorList>
    </citation>
    <scope>X-RAY CRYSTALLOGRAPHY (1.95 ANGSTROMS) IN COMPLEX WITH GON7 AND LAGE3</scope>
    <scope>IDENTIFICATION IN THE EKC/KEOPS COMPLEX</scope>
    <scope>CHARACTERIZATION OF VARIANT GAMOS3 GLN-325</scope>
</reference>
<protein>
    <recommendedName>
        <fullName evidence="1">tRNA N6-adenosine threonylcarbamoyltransferase</fullName>
        <ecNumber evidence="1 11">2.3.1.234</ecNumber>
    </recommendedName>
    <alternativeName>
        <fullName>N6-L-threonylcarbamoyladenine synthase</fullName>
        <shortName>t(6)A synthase</shortName>
    </alternativeName>
    <alternativeName>
        <fullName evidence="1">O-sialoglycoprotein endopeptidase</fullName>
        <shortName evidence="8">hOSGEP</shortName>
    </alternativeName>
    <alternativeName>
        <fullName evidence="1">t(6)A37 threonylcarbamoyladenosine biosynthesis protein OSGEP</fullName>
    </alternativeName>
    <alternativeName>
        <fullName evidence="1">tRNA threonylcarbamoyladenosine biosynthesis protein OSGEP</fullName>
    </alternativeName>
</protein>
<feature type="chain" id="PRO_0000096984" description="tRNA N6-adenosine threonylcarbamoyltransferase">
    <location>
        <begin position="1"/>
        <end position="335"/>
    </location>
</feature>
<feature type="binding site" evidence="1">
    <location>
        <position position="109"/>
    </location>
    <ligand>
        <name>a divalent metal cation</name>
        <dbReference type="ChEBI" id="CHEBI:60240"/>
    </ligand>
</feature>
<feature type="binding site" evidence="1">
    <location>
        <position position="113"/>
    </location>
    <ligand>
        <name>a divalent metal cation</name>
        <dbReference type="ChEBI" id="CHEBI:60240"/>
    </ligand>
</feature>
<feature type="binding site" evidence="1">
    <location>
        <begin position="130"/>
        <end position="134"/>
    </location>
    <ligand>
        <name>substrate</name>
    </ligand>
</feature>
<feature type="binding site" evidence="1">
    <location>
        <position position="130"/>
    </location>
    <ligand>
        <name>a divalent metal cation</name>
        <dbReference type="ChEBI" id="CHEBI:60240"/>
    </ligand>
</feature>
<feature type="binding site" evidence="1">
    <location>
        <position position="162"/>
    </location>
    <ligand>
        <name>substrate</name>
    </ligand>
</feature>
<feature type="binding site" evidence="1">
    <location>
        <position position="177"/>
    </location>
    <ligand>
        <name>substrate</name>
    </ligand>
</feature>
<feature type="binding site" evidence="1">
    <location>
        <position position="181"/>
    </location>
    <ligand>
        <name>substrate</name>
    </ligand>
</feature>
<feature type="binding site" evidence="1">
    <location>
        <position position="266"/>
    </location>
    <ligand>
        <name>substrate</name>
    </ligand>
</feature>
<feature type="binding site" evidence="1">
    <location>
        <position position="294"/>
    </location>
    <ligand>
        <name>a divalent metal cation</name>
        <dbReference type="ChEBI" id="CHEBI:60240"/>
    </ligand>
</feature>
<feature type="sequence variant" id="VAR_080357" description="In GAMOS3; strongly reduced formation of a threonylcarbamoyl group on adenosine at position 37 (t(6)A37) in tRNAs; dbSNP:rs1555331969." evidence="6">
    <original>I</original>
    <variation>F</variation>
    <location>
        <position position="14"/>
    </location>
</feature>
<feature type="sequence variant" id="VAR_080358" description="In GAMOS3; dbSNP:rs200347983." evidence="6">
    <original>K</original>
    <variation>E</variation>
    <location>
        <position position="78"/>
    </location>
</feature>
<feature type="sequence variant" id="VAR_080359" description="In GAMOS3; dbSNP:rs140583554." evidence="6">
    <original>V</original>
    <variation>M</variation>
    <location>
        <position position="107"/>
    </location>
</feature>
<feature type="sequence variant" id="VAR_080360" description="In GAMOS3; strongly reduced formation of a threonylcarbamoyl group on adenosine at position 37 (t(6)A37) in tRNAs; dbSNP:rs140076803." evidence="6">
    <original>C</original>
    <variation>R</variation>
    <location>
        <position position="110"/>
    </location>
</feature>
<feature type="sequence variant" id="VAR_080361" description="In GAMOS3; strongly reduced formation of a threonylcarbamoyl group on adenosine at position 37 (t(6)A37) in tRNAs; dbSNP:rs1443735811." evidence="6">
    <original>I</original>
    <variation>T</variation>
    <location>
        <position position="111"/>
    </location>
</feature>
<feature type="sequence variant" id="VAR_080362" description="In GAMOS3; dbSNP:rs1334263407." evidence="6">
    <original>I</original>
    <variation>T</variation>
    <location>
        <position position="139"/>
    </location>
</feature>
<feature type="sequence variant" id="VAR_080363" description="In GAMOS3; dbSNP:rs778931753." evidence="6">
    <original>G</original>
    <variation>A</variation>
    <location>
        <position position="177"/>
    </location>
</feature>
<feature type="sequence variant" id="VAR_080364" description="In GAMOS3; reduced formation of a threonylcarbamoyl group on adenosine at position 37 (t(6)A37) in tRNAs." evidence="6">
    <original>K</original>
    <variation>R</variation>
    <location>
        <position position="198"/>
    </location>
</feature>
<feature type="sequence variant" id="VAR_080365" description="In GAMOS3; reduced formation of a threonylcarbamoyl group on adenosine at position 37 (t(6)A37) in tRNAs; dbSNP:rs773173317." evidence="6">
    <original>R</original>
    <variation>Q</variation>
    <location>
        <position position="247"/>
    </location>
</feature>
<feature type="sequence variant" id="VAR_080366" description="In GAMOS3; dbSNP:rs374322839." evidence="6">
    <original>R</original>
    <variation>C</variation>
    <location>
        <position position="280"/>
    </location>
</feature>
<feature type="sequence variant" id="VAR_080367" description="In GAMOS3; dbSNP:rs144732839." evidence="6">
    <original>R</original>
    <variation>H</variation>
    <location>
        <position position="280"/>
    </location>
</feature>
<feature type="sequence variant" id="VAR_080368" description="In GAMOS3; reduced formation of a threonylcarbamoyl group on adenosine at position 37 (t(6)A37) in tRNAs; dbSNP:rs144732839." evidence="6">
    <original>R</original>
    <variation>L</variation>
    <location>
        <position position="280"/>
    </location>
</feature>
<feature type="sequence variant" id="VAR_080369" description="In GAMOS3; reduced formation of a threonylcarbamoyl group on adenosine at position 37 (t(6)A37) in tRNAs; dbSNP:rs753237335." evidence="5 6 7">
    <original>R</original>
    <variation>Q</variation>
    <location>
        <position position="325"/>
    </location>
</feature>
<feature type="sequence variant" id="VAR_080370" description="In GAMOS3; dbSNP:rs761839638." evidence="6">
    <original>R</original>
    <variation>W</variation>
    <location>
        <position position="325"/>
    </location>
</feature>
<feature type="strand" evidence="13">
    <location>
        <begin position="3"/>
        <end position="8"/>
    </location>
</feature>
<feature type="strand" evidence="13">
    <location>
        <begin position="10"/>
        <end position="20"/>
    </location>
</feature>
<feature type="strand" evidence="13">
    <location>
        <begin position="23"/>
        <end position="26"/>
    </location>
</feature>
<feature type="strand" evidence="13">
    <location>
        <begin position="29"/>
        <end position="31"/>
    </location>
</feature>
<feature type="helix" evidence="13">
    <location>
        <begin position="42"/>
        <end position="64"/>
    </location>
</feature>
<feature type="helix" evidence="13">
    <location>
        <begin position="68"/>
        <end position="70"/>
    </location>
</feature>
<feature type="strand" evidence="13">
    <location>
        <begin position="73"/>
        <end position="81"/>
    </location>
</feature>
<feature type="helix" evidence="13">
    <location>
        <begin position="83"/>
        <end position="100"/>
    </location>
</feature>
<feature type="strand" evidence="13">
    <location>
        <begin position="104"/>
        <end position="108"/>
    </location>
</feature>
<feature type="helix" evidence="13">
    <location>
        <begin position="109"/>
        <end position="121"/>
    </location>
</feature>
<feature type="strand" evidence="13">
    <location>
        <begin position="127"/>
        <end position="134"/>
    </location>
</feature>
<feature type="strand" evidence="13">
    <location>
        <begin position="136"/>
        <end position="142"/>
    </location>
</feature>
<feature type="strand" evidence="13">
    <location>
        <begin position="145"/>
        <end position="155"/>
    </location>
</feature>
<feature type="helix" evidence="13">
    <location>
        <begin position="157"/>
        <end position="167"/>
    </location>
</feature>
<feature type="helix" evidence="13">
    <location>
        <begin position="176"/>
        <end position="184"/>
    </location>
</feature>
<feature type="helix" evidence="13">
    <location>
        <begin position="205"/>
        <end position="221"/>
    </location>
</feature>
<feature type="helix" evidence="13">
    <location>
        <begin position="226"/>
        <end position="252"/>
    </location>
</feature>
<feature type="strand" evidence="13">
    <location>
        <begin position="255"/>
        <end position="261"/>
    </location>
</feature>
<feature type="helix" evidence="13">
    <location>
        <begin position="262"/>
        <end position="265"/>
    </location>
</feature>
<feature type="helix" evidence="13">
    <location>
        <begin position="267"/>
        <end position="280"/>
    </location>
</feature>
<feature type="strand" evidence="13">
    <location>
        <begin position="283"/>
        <end position="286"/>
    </location>
</feature>
<feature type="turn" evidence="13">
    <location>
        <begin position="289"/>
        <end position="291"/>
    </location>
</feature>
<feature type="helix" evidence="13">
    <location>
        <begin position="296"/>
        <end position="309"/>
    </location>
</feature>
<feature type="helix" evidence="13">
    <location>
        <begin position="315"/>
        <end position="317"/>
    </location>
</feature>
<feature type="helix" evidence="13">
    <location>
        <begin position="326"/>
        <end position="328"/>
    </location>
</feature>
<organism>
    <name type="scientific">Homo sapiens</name>
    <name type="common">Human</name>
    <dbReference type="NCBI Taxonomy" id="9606"/>
    <lineage>
        <taxon>Eukaryota</taxon>
        <taxon>Metazoa</taxon>
        <taxon>Chordata</taxon>
        <taxon>Craniata</taxon>
        <taxon>Vertebrata</taxon>
        <taxon>Euteleostomi</taxon>
        <taxon>Mammalia</taxon>
        <taxon>Eutheria</taxon>
        <taxon>Euarchontoglires</taxon>
        <taxon>Primates</taxon>
        <taxon>Haplorrhini</taxon>
        <taxon>Catarrhini</taxon>
        <taxon>Hominidae</taxon>
        <taxon>Homo</taxon>
    </lineage>
</organism>
<dbReference type="EC" id="2.3.1.234" evidence="1 11"/>
<dbReference type="EMBL" id="AB047823">
    <property type="protein sequence ID" value="BAB33147.1"/>
    <property type="molecule type" value="Genomic_DNA"/>
</dbReference>
<dbReference type="EMBL" id="AB050442">
    <property type="protein sequence ID" value="BAB33172.1"/>
    <property type="molecule type" value="mRNA"/>
</dbReference>
<dbReference type="EMBL" id="AJ271669">
    <property type="protein sequence ID" value="CAB71031.1"/>
    <property type="molecule type" value="mRNA"/>
</dbReference>
<dbReference type="EMBL" id="AK000418">
    <property type="protein sequence ID" value="BAA91150.1"/>
    <property type="molecule type" value="mRNA"/>
</dbReference>
<dbReference type="EMBL" id="CR457232">
    <property type="protein sequence ID" value="CAG33513.1"/>
    <property type="molecule type" value="mRNA"/>
</dbReference>
<dbReference type="EMBL" id="BC032310">
    <property type="protein sequence ID" value="AAH32310.1"/>
    <property type="molecule type" value="mRNA"/>
</dbReference>
<dbReference type="CCDS" id="CCDS9549.1"/>
<dbReference type="RefSeq" id="NP_060277.1">
    <property type="nucleotide sequence ID" value="NM_017807.4"/>
</dbReference>
<dbReference type="PDB" id="6GWJ">
    <property type="method" value="X-ray"/>
    <property type="resolution" value="1.95 A"/>
    <property type="chains" value="K=1-335"/>
</dbReference>
<dbReference type="PDBsum" id="6GWJ"/>
<dbReference type="SASBDB" id="Q9NPF4"/>
<dbReference type="SMR" id="Q9NPF4"/>
<dbReference type="BioGRID" id="120779">
    <property type="interactions" value="161"/>
</dbReference>
<dbReference type="ComplexPortal" id="CPX-2252">
    <property type="entry name" value="KEOPS tRNA N6-adenosine threonylcarbamoyltransferase complex"/>
</dbReference>
<dbReference type="CORUM" id="Q9NPF4"/>
<dbReference type="FunCoup" id="Q9NPF4">
    <property type="interactions" value="2345"/>
</dbReference>
<dbReference type="IntAct" id="Q9NPF4">
    <property type="interactions" value="86"/>
</dbReference>
<dbReference type="MINT" id="Q9NPF4"/>
<dbReference type="STRING" id="9606.ENSP00000206542"/>
<dbReference type="GlyGen" id="Q9NPF4">
    <property type="glycosylation" value="2 sites, 1 O-linked glycan (1 site)"/>
</dbReference>
<dbReference type="iPTMnet" id="Q9NPF4"/>
<dbReference type="PhosphoSitePlus" id="Q9NPF4"/>
<dbReference type="BioMuta" id="OSGEP"/>
<dbReference type="DMDM" id="47605574"/>
<dbReference type="jPOST" id="Q9NPF4"/>
<dbReference type="MassIVE" id="Q9NPF4"/>
<dbReference type="PaxDb" id="9606-ENSP00000206542"/>
<dbReference type="PeptideAtlas" id="Q9NPF4"/>
<dbReference type="ProteomicsDB" id="81984"/>
<dbReference type="Pumba" id="Q9NPF4"/>
<dbReference type="Antibodypedia" id="22030">
    <property type="antibodies" value="169 antibodies from 24 providers"/>
</dbReference>
<dbReference type="DNASU" id="55644"/>
<dbReference type="Ensembl" id="ENST00000206542.9">
    <property type="protein sequence ID" value="ENSP00000206542.4"/>
    <property type="gene ID" value="ENSG00000092094.11"/>
</dbReference>
<dbReference type="Ensembl" id="ENST00000708774.1">
    <property type="protein sequence ID" value="ENSP00000517336.1"/>
    <property type="gene ID" value="ENSG00000291794.1"/>
</dbReference>
<dbReference type="GeneID" id="55644"/>
<dbReference type="KEGG" id="hsa:55644"/>
<dbReference type="MANE-Select" id="ENST00000206542.9">
    <property type="protein sequence ID" value="ENSP00000206542.4"/>
    <property type="RefSeq nucleotide sequence ID" value="NM_017807.4"/>
    <property type="RefSeq protein sequence ID" value="NP_060277.1"/>
</dbReference>
<dbReference type="UCSC" id="uc001vxf.4">
    <property type="organism name" value="human"/>
</dbReference>
<dbReference type="AGR" id="HGNC:18028"/>
<dbReference type="CTD" id="55644"/>
<dbReference type="DisGeNET" id="55644"/>
<dbReference type="GeneCards" id="OSGEP"/>
<dbReference type="HGNC" id="HGNC:18028">
    <property type="gene designation" value="OSGEP"/>
</dbReference>
<dbReference type="HPA" id="ENSG00000092094">
    <property type="expression patterns" value="Low tissue specificity"/>
</dbReference>
<dbReference type="MalaCards" id="OSGEP"/>
<dbReference type="MIM" id="610107">
    <property type="type" value="gene"/>
</dbReference>
<dbReference type="MIM" id="617729">
    <property type="type" value="phenotype"/>
</dbReference>
<dbReference type="neXtProt" id="NX_Q9NPF4"/>
<dbReference type="OpenTargets" id="ENSG00000092094"/>
<dbReference type="Orphanet" id="2065">
    <property type="disease" value="Galloway-Mowat syndrome"/>
</dbReference>
<dbReference type="PharmGKB" id="PA32834"/>
<dbReference type="VEuPathDB" id="HostDB:ENSG00000092094"/>
<dbReference type="eggNOG" id="KOG2708">
    <property type="taxonomic scope" value="Eukaryota"/>
</dbReference>
<dbReference type="GeneTree" id="ENSGT00940000153744"/>
<dbReference type="HOGENOM" id="CLU_023208_2_2_1"/>
<dbReference type="InParanoid" id="Q9NPF4"/>
<dbReference type="OMA" id="HHRSWVV"/>
<dbReference type="OrthoDB" id="10254073at2759"/>
<dbReference type="PAN-GO" id="Q9NPF4">
    <property type="GO annotations" value="2 GO annotations based on evolutionary models"/>
</dbReference>
<dbReference type="PhylomeDB" id="Q9NPF4"/>
<dbReference type="TreeFam" id="TF313621"/>
<dbReference type="PathwayCommons" id="Q9NPF4"/>
<dbReference type="Reactome" id="R-HSA-6782315">
    <property type="pathway name" value="tRNA modification in the nucleus and cytosol"/>
</dbReference>
<dbReference type="SignaLink" id="Q9NPF4"/>
<dbReference type="BioGRID-ORCS" id="55644">
    <property type="hits" value="698 hits in 1167 CRISPR screens"/>
</dbReference>
<dbReference type="ChiTaRS" id="OSGEP">
    <property type="organism name" value="human"/>
</dbReference>
<dbReference type="GeneWiki" id="OSGEP"/>
<dbReference type="GenomeRNAi" id="55644"/>
<dbReference type="Pharos" id="Q9NPF4">
    <property type="development level" value="Tbio"/>
</dbReference>
<dbReference type="PRO" id="PR:Q9NPF4"/>
<dbReference type="Proteomes" id="UP000005640">
    <property type="component" value="Chromosome 14"/>
</dbReference>
<dbReference type="RNAct" id="Q9NPF4">
    <property type="molecule type" value="protein"/>
</dbReference>
<dbReference type="Bgee" id="ENSG00000092094">
    <property type="expression patterns" value="Expressed in right hemisphere of cerebellum and 173 other cell types or tissues"/>
</dbReference>
<dbReference type="ExpressionAtlas" id="Q9NPF4">
    <property type="expression patterns" value="baseline and differential"/>
</dbReference>
<dbReference type="GO" id="GO:0005737">
    <property type="term" value="C:cytoplasm"/>
    <property type="evidence" value="ECO:0000314"/>
    <property type="project" value="UniProtKB"/>
</dbReference>
<dbReference type="GO" id="GO:0005829">
    <property type="term" value="C:cytosol"/>
    <property type="evidence" value="ECO:0000314"/>
    <property type="project" value="HPA"/>
</dbReference>
<dbReference type="GO" id="GO:0000408">
    <property type="term" value="C:EKC/KEOPS complex"/>
    <property type="evidence" value="ECO:0000314"/>
    <property type="project" value="UniProtKB"/>
</dbReference>
<dbReference type="GO" id="GO:0005654">
    <property type="term" value="C:nucleoplasm"/>
    <property type="evidence" value="ECO:0000314"/>
    <property type="project" value="HPA"/>
</dbReference>
<dbReference type="GO" id="GO:0005634">
    <property type="term" value="C:nucleus"/>
    <property type="evidence" value="ECO:0000314"/>
    <property type="project" value="UniProtKB"/>
</dbReference>
<dbReference type="GO" id="GO:0046872">
    <property type="term" value="F:metal ion binding"/>
    <property type="evidence" value="ECO:0007669"/>
    <property type="project" value="UniProtKB-KW"/>
</dbReference>
<dbReference type="GO" id="GO:0061711">
    <property type="term" value="F:N(6)-L-threonylcarbamoyladenine synthase activity"/>
    <property type="evidence" value="ECO:0000314"/>
    <property type="project" value="UniProt"/>
</dbReference>
<dbReference type="GO" id="GO:0006400">
    <property type="term" value="P:tRNA modification"/>
    <property type="evidence" value="ECO:0000314"/>
    <property type="project" value="UniProt"/>
</dbReference>
<dbReference type="GO" id="GO:0002949">
    <property type="term" value="P:tRNA threonylcarbamoyladenosine modification"/>
    <property type="evidence" value="ECO:0000314"/>
    <property type="project" value="UniProtKB"/>
</dbReference>
<dbReference type="CDD" id="cd24132">
    <property type="entry name" value="ASKHA_NBD_OSGEP_like_euk"/>
    <property type="match status" value="1"/>
</dbReference>
<dbReference type="FunFam" id="3.30.420.40:FF:000038">
    <property type="entry name" value="Probable tRNA N6-adenosine threonylcarbamoyltransferase"/>
    <property type="match status" value="1"/>
</dbReference>
<dbReference type="FunFam" id="3.30.420.40:FF:000295">
    <property type="entry name" value="Probable tRNA N6-adenosine threonylcarbamoyltransferase"/>
    <property type="match status" value="1"/>
</dbReference>
<dbReference type="Gene3D" id="3.30.420.40">
    <property type="match status" value="2"/>
</dbReference>
<dbReference type="HAMAP" id="MF_01446">
    <property type="entry name" value="Kae1"/>
    <property type="match status" value="1"/>
</dbReference>
<dbReference type="InterPro" id="IPR043129">
    <property type="entry name" value="ATPase_NBD"/>
</dbReference>
<dbReference type="InterPro" id="IPR000905">
    <property type="entry name" value="Gcp-like_dom"/>
</dbReference>
<dbReference type="InterPro" id="IPR017861">
    <property type="entry name" value="KAE1/TsaD"/>
</dbReference>
<dbReference type="InterPro" id="IPR034680">
    <property type="entry name" value="Kae1_archaea_euk"/>
</dbReference>
<dbReference type="InterPro" id="IPR017860">
    <property type="entry name" value="Peptidase_M22_CS"/>
</dbReference>
<dbReference type="NCBIfam" id="TIGR03722">
    <property type="entry name" value="arch_KAE1"/>
    <property type="match status" value="1"/>
</dbReference>
<dbReference type="NCBIfam" id="TIGR00329">
    <property type="entry name" value="gcp_kae1"/>
    <property type="match status" value="1"/>
</dbReference>
<dbReference type="PANTHER" id="PTHR11735">
    <property type="entry name" value="TRNA N6-ADENOSINE THREONYLCARBAMOYLTRANSFERASE"/>
    <property type="match status" value="1"/>
</dbReference>
<dbReference type="PANTHER" id="PTHR11735:SF14">
    <property type="entry name" value="TRNA N6-ADENOSINE THREONYLCARBAMOYLTRANSFERASE"/>
    <property type="match status" value="1"/>
</dbReference>
<dbReference type="Pfam" id="PF00814">
    <property type="entry name" value="TsaD"/>
    <property type="match status" value="1"/>
</dbReference>
<dbReference type="PRINTS" id="PR00789">
    <property type="entry name" value="OSIALOPTASE"/>
</dbReference>
<dbReference type="SUPFAM" id="SSF53067">
    <property type="entry name" value="Actin-like ATPase domain"/>
    <property type="match status" value="1"/>
</dbReference>
<dbReference type="PROSITE" id="PS01016">
    <property type="entry name" value="GLYCOPROTEASE"/>
    <property type="match status" value="1"/>
</dbReference>